<name>CLPP_BUCAP</name>
<proteinExistence type="inferred from homology"/>
<dbReference type="EC" id="3.4.21.92" evidence="1"/>
<dbReference type="EMBL" id="AE013218">
    <property type="protein sequence ID" value="AAM68002.1"/>
    <property type="molecule type" value="Genomic_DNA"/>
</dbReference>
<dbReference type="RefSeq" id="WP_011053969.1">
    <property type="nucleotide sequence ID" value="NC_004061.1"/>
</dbReference>
<dbReference type="SMR" id="Q8K990"/>
<dbReference type="STRING" id="198804.BUsg_459"/>
<dbReference type="MEROPS" id="S14.001"/>
<dbReference type="GeneID" id="93003930"/>
<dbReference type="KEGG" id="bas:BUsg_459"/>
<dbReference type="eggNOG" id="COG0740">
    <property type="taxonomic scope" value="Bacteria"/>
</dbReference>
<dbReference type="HOGENOM" id="CLU_058707_3_2_6"/>
<dbReference type="Proteomes" id="UP000000416">
    <property type="component" value="Chromosome"/>
</dbReference>
<dbReference type="GO" id="GO:0005737">
    <property type="term" value="C:cytoplasm"/>
    <property type="evidence" value="ECO:0007669"/>
    <property type="project" value="UniProtKB-SubCell"/>
</dbReference>
<dbReference type="GO" id="GO:0009368">
    <property type="term" value="C:endopeptidase Clp complex"/>
    <property type="evidence" value="ECO:0007669"/>
    <property type="project" value="TreeGrafter"/>
</dbReference>
<dbReference type="GO" id="GO:0004176">
    <property type="term" value="F:ATP-dependent peptidase activity"/>
    <property type="evidence" value="ECO:0007669"/>
    <property type="project" value="InterPro"/>
</dbReference>
<dbReference type="GO" id="GO:0051117">
    <property type="term" value="F:ATPase binding"/>
    <property type="evidence" value="ECO:0007669"/>
    <property type="project" value="TreeGrafter"/>
</dbReference>
<dbReference type="GO" id="GO:0004252">
    <property type="term" value="F:serine-type endopeptidase activity"/>
    <property type="evidence" value="ECO:0007669"/>
    <property type="project" value="UniProtKB-UniRule"/>
</dbReference>
<dbReference type="GO" id="GO:0006515">
    <property type="term" value="P:protein quality control for misfolded or incompletely synthesized proteins"/>
    <property type="evidence" value="ECO:0007669"/>
    <property type="project" value="TreeGrafter"/>
</dbReference>
<dbReference type="CDD" id="cd07017">
    <property type="entry name" value="S14_ClpP_2"/>
    <property type="match status" value="1"/>
</dbReference>
<dbReference type="FunFam" id="3.90.226.10:FF:000001">
    <property type="entry name" value="ATP-dependent Clp protease proteolytic subunit"/>
    <property type="match status" value="1"/>
</dbReference>
<dbReference type="Gene3D" id="3.90.226.10">
    <property type="entry name" value="2-enoyl-CoA Hydratase, Chain A, domain 1"/>
    <property type="match status" value="1"/>
</dbReference>
<dbReference type="HAMAP" id="MF_00444">
    <property type="entry name" value="ClpP"/>
    <property type="match status" value="1"/>
</dbReference>
<dbReference type="InterPro" id="IPR001907">
    <property type="entry name" value="ClpP"/>
</dbReference>
<dbReference type="InterPro" id="IPR029045">
    <property type="entry name" value="ClpP/crotonase-like_dom_sf"/>
</dbReference>
<dbReference type="InterPro" id="IPR023562">
    <property type="entry name" value="ClpP/TepA"/>
</dbReference>
<dbReference type="InterPro" id="IPR033135">
    <property type="entry name" value="ClpP_His_AS"/>
</dbReference>
<dbReference type="InterPro" id="IPR018215">
    <property type="entry name" value="ClpP_Ser_AS"/>
</dbReference>
<dbReference type="NCBIfam" id="TIGR00493">
    <property type="entry name" value="clpP"/>
    <property type="match status" value="1"/>
</dbReference>
<dbReference type="NCBIfam" id="NF001368">
    <property type="entry name" value="PRK00277.1"/>
    <property type="match status" value="1"/>
</dbReference>
<dbReference type="NCBIfam" id="NF009205">
    <property type="entry name" value="PRK12553.1"/>
    <property type="match status" value="1"/>
</dbReference>
<dbReference type="PANTHER" id="PTHR10381">
    <property type="entry name" value="ATP-DEPENDENT CLP PROTEASE PROTEOLYTIC SUBUNIT"/>
    <property type="match status" value="1"/>
</dbReference>
<dbReference type="PANTHER" id="PTHR10381:SF70">
    <property type="entry name" value="ATP-DEPENDENT CLP PROTEASE PROTEOLYTIC SUBUNIT"/>
    <property type="match status" value="1"/>
</dbReference>
<dbReference type="Pfam" id="PF00574">
    <property type="entry name" value="CLP_protease"/>
    <property type="match status" value="1"/>
</dbReference>
<dbReference type="PRINTS" id="PR00127">
    <property type="entry name" value="CLPPROTEASEP"/>
</dbReference>
<dbReference type="SUPFAM" id="SSF52096">
    <property type="entry name" value="ClpP/crotonase"/>
    <property type="match status" value="1"/>
</dbReference>
<dbReference type="PROSITE" id="PS00382">
    <property type="entry name" value="CLP_PROTEASE_HIS"/>
    <property type="match status" value="1"/>
</dbReference>
<dbReference type="PROSITE" id="PS00381">
    <property type="entry name" value="CLP_PROTEASE_SER"/>
    <property type="match status" value="1"/>
</dbReference>
<protein>
    <recommendedName>
        <fullName evidence="1">ATP-dependent Clp protease proteolytic subunit</fullName>
        <ecNumber evidence="1">3.4.21.92</ecNumber>
    </recommendedName>
    <alternativeName>
        <fullName evidence="1">Endopeptidase Clp</fullName>
    </alternativeName>
</protein>
<comment type="function">
    <text evidence="1">Cleaves peptides in various proteins in a process that requires ATP hydrolysis. Has a chymotrypsin-like activity. Plays a major role in the degradation of misfolded proteins.</text>
</comment>
<comment type="catalytic activity">
    <reaction evidence="1">
        <text>Hydrolysis of proteins to small peptides in the presence of ATP and magnesium. alpha-casein is the usual test substrate. In the absence of ATP, only oligopeptides shorter than five residues are hydrolyzed (such as succinyl-Leu-Tyr-|-NHMec, and Leu-Tyr-Leu-|-Tyr-Trp, in which cleavage of the -Tyr-|-Leu- and -Tyr-|-Trp bonds also occurs).</text>
        <dbReference type="EC" id="3.4.21.92"/>
    </reaction>
</comment>
<comment type="subunit">
    <text evidence="1">Fourteen ClpP subunits assemble into 2 heptameric rings which stack back to back to give a disk-like structure with a central cavity, resembling the structure of eukaryotic proteasomes.</text>
</comment>
<comment type="subcellular location">
    <subcellularLocation>
        <location evidence="1">Cytoplasm</location>
    </subcellularLocation>
</comment>
<comment type="similarity">
    <text evidence="1">Belongs to the peptidase S14 family.</text>
</comment>
<organism>
    <name type="scientific">Buchnera aphidicola subsp. Schizaphis graminum (strain Sg)</name>
    <dbReference type="NCBI Taxonomy" id="198804"/>
    <lineage>
        <taxon>Bacteria</taxon>
        <taxon>Pseudomonadati</taxon>
        <taxon>Pseudomonadota</taxon>
        <taxon>Gammaproteobacteria</taxon>
        <taxon>Enterobacterales</taxon>
        <taxon>Erwiniaceae</taxon>
        <taxon>Buchnera</taxon>
    </lineage>
</organism>
<gene>
    <name evidence="1" type="primary">clpP</name>
    <name type="ordered locus">BUsg_459</name>
</gene>
<evidence type="ECO:0000255" key="1">
    <source>
        <dbReference type="HAMAP-Rule" id="MF_00444"/>
    </source>
</evidence>
<feature type="chain" id="PRO_0000179520" description="ATP-dependent Clp protease proteolytic subunit">
    <location>
        <begin position="1"/>
        <end position="197"/>
    </location>
</feature>
<feature type="active site" description="Nucleophile" evidence="1">
    <location>
        <position position="102"/>
    </location>
</feature>
<feature type="active site" evidence="1">
    <location>
        <position position="127"/>
    </location>
</feature>
<accession>Q8K990</accession>
<sequence length="197" mass="21970">MKSNSVLIPMVVEQHSRGERSYDIYSRLLKERIIFITGTIEDNMASSIVAQMLFLEAESLDKDIFLYINSPGGIITSGMSIYDTMQFIKPDVNTICIGQACSMAAFLLSSGTKGKRSCLPNARIMIHQPLGGYQGQASDIAIHAEEINKMKKKLNKLMSLNTGQSIKKINKDTERDCFLSAHESIKYGLIDLILTQR</sequence>
<keyword id="KW-0963">Cytoplasm</keyword>
<keyword id="KW-0378">Hydrolase</keyword>
<keyword id="KW-0645">Protease</keyword>
<keyword id="KW-0720">Serine protease</keyword>
<reference key="1">
    <citation type="journal article" date="2002" name="Science">
        <title>50 million years of genomic stasis in endosymbiotic bacteria.</title>
        <authorList>
            <person name="Tamas I."/>
            <person name="Klasson L."/>
            <person name="Canbaeck B."/>
            <person name="Naeslund A.K."/>
            <person name="Eriksson A.-S."/>
            <person name="Wernegreen J.J."/>
            <person name="Sandstroem J.P."/>
            <person name="Moran N.A."/>
            <person name="Andersson S.G.E."/>
        </authorList>
    </citation>
    <scope>NUCLEOTIDE SEQUENCE [LARGE SCALE GENOMIC DNA]</scope>
    <source>
        <strain>Sg</strain>
    </source>
</reference>